<protein>
    <recommendedName>
        <fullName>F-actin-capping protein subunit beta</fullName>
    </recommendedName>
    <alternativeName>
        <fullName>CapZ-beta</fullName>
    </alternativeName>
</protein>
<keyword id="KW-0007">Acetylation</keyword>
<keyword id="KW-0117">Actin capping</keyword>
<keyword id="KW-0009">Actin-binding</keyword>
<keyword id="KW-0963">Cytoplasm</keyword>
<keyword id="KW-0206">Cytoskeleton</keyword>
<keyword id="KW-1185">Reference proteome</keyword>
<organism>
    <name type="scientific">Arabidopsis thaliana</name>
    <name type="common">Mouse-ear cress</name>
    <dbReference type="NCBI Taxonomy" id="3702"/>
    <lineage>
        <taxon>Eukaryota</taxon>
        <taxon>Viridiplantae</taxon>
        <taxon>Streptophyta</taxon>
        <taxon>Embryophyta</taxon>
        <taxon>Tracheophyta</taxon>
        <taxon>Spermatophyta</taxon>
        <taxon>Magnoliopsida</taxon>
        <taxon>eudicotyledons</taxon>
        <taxon>Gunneridae</taxon>
        <taxon>Pentapetalae</taxon>
        <taxon>rosids</taxon>
        <taxon>malvids</taxon>
        <taxon>Brassicales</taxon>
        <taxon>Brassicaceae</taxon>
        <taxon>Camelineae</taxon>
        <taxon>Arabidopsis</taxon>
    </lineage>
</organism>
<dbReference type="EMBL" id="AC012654">
    <property type="protein sequence ID" value="AAF43232.1"/>
    <property type="molecule type" value="Genomic_DNA"/>
</dbReference>
<dbReference type="EMBL" id="CP002684">
    <property type="protein sequence ID" value="AEE35233.1"/>
    <property type="molecule type" value="Genomic_DNA"/>
</dbReference>
<dbReference type="EMBL" id="BT029459">
    <property type="protein sequence ID" value="ABK59688.1"/>
    <property type="molecule type" value="mRNA"/>
</dbReference>
<dbReference type="PIR" id="D96740">
    <property type="entry name" value="D96740"/>
</dbReference>
<dbReference type="SMR" id="Q9M9G7"/>
<dbReference type="FunCoup" id="Q9M9G7">
    <property type="interactions" value="3896"/>
</dbReference>
<dbReference type="STRING" id="3702.Q9M9G7"/>
<dbReference type="iPTMnet" id="Q9M9G7"/>
<dbReference type="PaxDb" id="3702-AT1G71790.1"/>
<dbReference type="ProteomicsDB" id="240279"/>
<dbReference type="EnsemblPlants" id="AT1G71790.1">
    <property type="protein sequence ID" value="AT1G71790.1"/>
    <property type="gene ID" value="AT1G71790"/>
</dbReference>
<dbReference type="GeneID" id="843509"/>
<dbReference type="Gramene" id="AT1G71790.1">
    <property type="protein sequence ID" value="AT1G71790.1"/>
    <property type="gene ID" value="AT1G71790"/>
</dbReference>
<dbReference type="KEGG" id="ath:AT1G71790"/>
<dbReference type="Araport" id="AT1G71790"/>
<dbReference type="TAIR" id="AT1G71790">
    <property type="gene designation" value="CPB"/>
</dbReference>
<dbReference type="eggNOG" id="KOG3174">
    <property type="taxonomic scope" value="Eukaryota"/>
</dbReference>
<dbReference type="HOGENOM" id="CLU_045864_1_0_1"/>
<dbReference type="InParanoid" id="Q9M9G7"/>
<dbReference type="OMA" id="WSNKYYP"/>
<dbReference type="OrthoDB" id="9979678at2759"/>
<dbReference type="PhylomeDB" id="Q9M9G7"/>
<dbReference type="PRO" id="PR:Q9M9G7"/>
<dbReference type="Proteomes" id="UP000006548">
    <property type="component" value="Chromosome 1"/>
</dbReference>
<dbReference type="ExpressionAtlas" id="Q9M9G7">
    <property type="expression patterns" value="baseline and differential"/>
</dbReference>
<dbReference type="GO" id="GO:0005737">
    <property type="term" value="C:cytoplasm"/>
    <property type="evidence" value="ECO:0007669"/>
    <property type="project" value="UniProtKB-KW"/>
</dbReference>
<dbReference type="GO" id="GO:0008290">
    <property type="term" value="C:F-actin capping protein complex"/>
    <property type="evidence" value="ECO:0007669"/>
    <property type="project" value="InterPro"/>
</dbReference>
<dbReference type="GO" id="GO:0003779">
    <property type="term" value="F:actin binding"/>
    <property type="evidence" value="ECO:0007669"/>
    <property type="project" value="UniProtKB-KW"/>
</dbReference>
<dbReference type="GO" id="GO:0030036">
    <property type="term" value="P:actin cytoskeleton organization"/>
    <property type="evidence" value="ECO:0000315"/>
    <property type="project" value="TAIR"/>
</dbReference>
<dbReference type="GO" id="GO:0051693">
    <property type="term" value="P:actin filament capping"/>
    <property type="evidence" value="ECO:0000315"/>
    <property type="project" value="TAIR"/>
</dbReference>
<dbReference type="GO" id="GO:0007015">
    <property type="term" value="P:actin filament organization"/>
    <property type="evidence" value="ECO:0000315"/>
    <property type="project" value="TAIR"/>
</dbReference>
<dbReference type="GO" id="GO:0051016">
    <property type="term" value="P:barbed-end actin filament capping"/>
    <property type="evidence" value="ECO:0007669"/>
    <property type="project" value="InterPro"/>
</dbReference>
<dbReference type="GO" id="GO:0009408">
    <property type="term" value="P:response to heat"/>
    <property type="evidence" value="ECO:0000315"/>
    <property type="project" value="TAIR"/>
</dbReference>
<dbReference type="FunFam" id="1.20.58.570:FF:000001">
    <property type="entry name" value="F-actin-capping protein subunit beta"/>
    <property type="match status" value="1"/>
</dbReference>
<dbReference type="FunFam" id="3.90.1150.210:FF:000004">
    <property type="entry name" value="F-actin-capping protein subunit beta"/>
    <property type="match status" value="1"/>
</dbReference>
<dbReference type="Gene3D" id="1.20.58.570">
    <property type="match status" value="1"/>
</dbReference>
<dbReference type="Gene3D" id="3.90.1150.210">
    <property type="entry name" value="F-actin capping protein, beta subunit"/>
    <property type="match status" value="1"/>
</dbReference>
<dbReference type="InterPro" id="IPR037282">
    <property type="entry name" value="CapZ_alpha/beta"/>
</dbReference>
<dbReference type="InterPro" id="IPR042276">
    <property type="entry name" value="CapZ_alpha/beta_2"/>
</dbReference>
<dbReference type="InterPro" id="IPR001698">
    <property type="entry name" value="CAPZB"/>
</dbReference>
<dbReference type="InterPro" id="IPR043175">
    <property type="entry name" value="CAPZB_N"/>
</dbReference>
<dbReference type="InterPro" id="IPR019771">
    <property type="entry name" value="F-actin_capping_bsu_CS"/>
</dbReference>
<dbReference type="PANTHER" id="PTHR10619">
    <property type="entry name" value="F-ACTIN-CAPPING PROTEIN SUBUNIT BETA"/>
    <property type="match status" value="1"/>
</dbReference>
<dbReference type="PANTHER" id="PTHR10619:SF0">
    <property type="entry name" value="F-ACTIN-CAPPING PROTEIN SUBUNIT BETA ISOFORMS 1 AND 2"/>
    <property type="match status" value="1"/>
</dbReference>
<dbReference type="Pfam" id="PF01115">
    <property type="entry name" value="F_actin_cap_B"/>
    <property type="match status" value="1"/>
</dbReference>
<dbReference type="PRINTS" id="PR00192">
    <property type="entry name" value="FACTINCAPB"/>
</dbReference>
<dbReference type="SUPFAM" id="SSF90096">
    <property type="entry name" value="Subunits of heterodimeric actin filament capping protein Capz"/>
    <property type="match status" value="1"/>
</dbReference>
<dbReference type="PROSITE" id="PS00231">
    <property type="entry name" value="F_ACTIN_CAPPING_BETA"/>
    <property type="match status" value="1"/>
</dbReference>
<reference key="1">
    <citation type="journal article" date="2000" name="Nature">
        <title>Sequence and analysis of chromosome 1 of the plant Arabidopsis thaliana.</title>
        <authorList>
            <person name="Theologis A."/>
            <person name="Ecker J.R."/>
            <person name="Palm C.J."/>
            <person name="Federspiel N.A."/>
            <person name="Kaul S."/>
            <person name="White O."/>
            <person name="Alonso J."/>
            <person name="Altafi H."/>
            <person name="Araujo R."/>
            <person name="Bowman C.L."/>
            <person name="Brooks S.Y."/>
            <person name="Buehler E."/>
            <person name="Chan A."/>
            <person name="Chao Q."/>
            <person name="Chen H."/>
            <person name="Cheuk R.F."/>
            <person name="Chin C.W."/>
            <person name="Chung M.K."/>
            <person name="Conn L."/>
            <person name="Conway A.B."/>
            <person name="Conway A.R."/>
            <person name="Creasy T.H."/>
            <person name="Dewar K."/>
            <person name="Dunn P."/>
            <person name="Etgu P."/>
            <person name="Feldblyum T.V."/>
            <person name="Feng J.-D."/>
            <person name="Fong B."/>
            <person name="Fujii C.Y."/>
            <person name="Gill J.E."/>
            <person name="Goldsmith A.D."/>
            <person name="Haas B."/>
            <person name="Hansen N.F."/>
            <person name="Hughes B."/>
            <person name="Huizar L."/>
            <person name="Hunter J.L."/>
            <person name="Jenkins J."/>
            <person name="Johnson-Hopson C."/>
            <person name="Khan S."/>
            <person name="Khaykin E."/>
            <person name="Kim C.J."/>
            <person name="Koo H.L."/>
            <person name="Kremenetskaia I."/>
            <person name="Kurtz D.B."/>
            <person name="Kwan A."/>
            <person name="Lam B."/>
            <person name="Langin-Hooper S."/>
            <person name="Lee A."/>
            <person name="Lee J.M."/>
            <person name="Lenz C.A."/>
            <person name="Li J.H."/>
            <person name="Li Y.-P."/>
            <person name="Lin X."/>
            <person name="Liu S.X."/>
            <person name="Liu Z.A."/>
            <person name="Luros J.S."/>
            <person name="Maiti R."/>
            <person name="Marziali A."/>
            <person name="Militscher J."/>
            <person name="Miranda M."/>
            <person name="Nguyen M."/>
            <person name="Nierman W.C."/>
            <person name="Osborne B.I."/>
            <person name="Pai G."/>
            <person name="Peterson J."/>
            <person name="Pham P.K."/>
            <person name="Rizzo M."/>
            <person name="Rooney T."/>
            <person name="Rowley D."/>
            <person name="Sakano H."/>
            <person name="Salzberg S.L."/>
            <person name="Schwartz J.R."/>
            <person name="Shinn P."/>
            <person name="Southwick A.M."/>
            <person name="Sun H."/>
            <person name="Tallon L.J."/>
            <person name="Tambunga G."/>
            <person name="Toriumi M.J."/>
            <person name="Town C.D."/>
            <person name="Utterback T."/>
            <person name="Van Aken S."/>
            <person name="Vaysberg M."/>
            <person name="Vysotskaia V.S."/>
            <person name="Walker M."/>
            <person name="Wu D."/>
            <person name="Yu G."/>
            <person name="Fraser C.M."/>
            <person name="Venter J.C."/>
            <person name="Davis R.W."/>
        </authorList>
    </citation>
    <scope>NUCLEOTIDE SEQUENCE [LARGE SCALE GENOMIC DNA]</scope>
    <source>
        <strain>cv. Columbia</strain>
    </source>
</reference>
<reference key="2">
    <citation type="journal article" date="2017" name="Plant J.">
        <title>Araport11: a complete reannotation of the Arabidopsis thaliana reference genome.</title>
        <authorList>
            <person name="Cheng C.Y."/>
            <person name="Krishnakumar V."/>
            <person name="Chan A.P."/>
            <person name="Thibaud-Nissen F."/>
            <person name="Schobel S."/>
            <person name="Town C.D."/>
        </authorList>
    </citation>
    <scope>GENOME REANNOTATION</scope>
    <source>
        <strain>cv. Columbia</strain>
    </source>
</reference>
<reference key="3">
    <citation type="submission" date="2006-11" db="EMBL/GenBank/DDBJ databases">
        <title>Arabidopsis ORF clones.</title>
        <authorList>
            <person name="Bautista V.R."/>
            <person name="Kim C.J."/>
            <person name="Chen H."/>
            <person name="Quinitio C."/>
            <person name="Ecker J.R."/>
        </authorList>
    </citation>
    <scope>NUCLEOTIDE SEQUENCE [LARGE SCALE MRNA]</scope>
    <source>
        <strain>cv. Columbia</strain>
    </source>
</reference>
<reference key="4">
    <citation type="journal article" date="2012" name="Mol. Cell. Proteomics">
        <title>Comparative large-scale characterisation of plant vs. mammal proteins reveals similar and idiosyncratic N-alpha acetylation features.</title>
        <authorList>
            <person name="Bienvenut W.V."/>
            <person name="Sumpton D."/>
            <person name="Martinez A."/>
            <person name="Lilla S."/>
            <person name="Espagne C."/>
            <person name="Meinnel T."/>
            <person name="Giglione C."/>
        </authorList>
    </citation>
    <scope>ACETYLATION [LARGE SCALE ANALYSIS] AT MET-1</scope>
    <scope>IDENTIFICATION BY MASS SPECTROMETRY [LARGE SCALE ANALYSIS]</scope>
</reference>
<evidence type="ECO:0000250" key="1"/>
<evidence type="ECO:0000250" key="2">
    <source>
        <dbReference type="UniProtKB" id="A9XFX6"/>
    </source>
</evidence>
<evidence type="ECO:0000305" key="3"/>
<evidence type="ECO:0007744" key="4">
    <source>
    </source>
</evidence>
<accession>Q9M9G7</accession>
<accession>A0JQ89</accession>
<feature type="chain" id="PRO_0000204640" description="F-actin-capping protein subunit beta">
    <location>
        <begin position="1"/>
        <end position="256"/>
    </location>
</feature>
<feature type="modified residue" description="N-acetylmethionine" evidence="4">
    <location>
        <position position="1"/>
    </location>
</feature>
<comment type="function">
    <text evidence="1">F-actin-capping proteins bind in a Ca(2+)-independent manner to the fast growing ends of actin filaments (barbed end) thereby blocking the exchange of subunits at these ends. Unlike other capping proteins (such as gelsolin and severin), these proteins do not sever actin filaments (By similarity).</text>
</comment>
<comment type="subunit">
    <text evidence="1">Component of the F-actin capping complex, composed of a heterodimer of an alpha and a beta subunit.</text>
</comment>
<comment type="subcellular location">
    <subcellularLocation>
        <location evidence="2">Cytoplasm</location>
        <location evidence="2">Cytoskeleton</location>
    </subcellularLocation>
</comment>
<comment type="similarity">
    <text evidence="3">Belongs to the F-actin-capping protein beta subunit family.</text>
</comment>
<proteinExistence type="evidence at protein level"/>
<gene>
    <name type="ordered locus">At1g71790</name>
    <name type="ORF">F14O23.17</name>
</gene>
<sequence>MEAALGLLRRMPPKQSETALSALLSLIPQHSSDLLSQVDLPLQVLRDIESGKDFILCEYNRDADSYRSPWSNKYLPPLEDALYPSSELRKLEVEANDIFAIYRDQYYEGGISSVYMWEDDNEGFVACFLIKKDGSKSGHGRRGCLEEGAWDAIHVIQVGSEEEEMAQYCLTSTIMLSLTTDDESSGKFGLSGSIRRQMKMELAVADGHLCNMGRMIEELEGKLRNSLDQVYFGKTREMVCTLRPPAEIVQMRLPDT</sequence>
<name>CAPZB_ARATH</name>